<accession>B7MRS8</accession>
<evidence type="ECO:0000255" key="1">
    <source>
        <dbReference type="HAMAP-Rule" id="MF_01186"/>
    </source>
</evidence>
<evidence type="ECO:0000256" key="2">
    <source>
        <dbReference type="SAM" id="MobiDB-lite"/>
    </source>
</evidence>
<organism>
    <name type="scientific">Escherichia coli O81 (strain ED1a)</name>
    <dbReference type="NCBI Taxonomy" id="585397"/>
    <lineage>
        <taxon>Bacteria</taxon>
        <taxon>Pseudomonadati</taxon>
        <taxon>Pseudomonadota</taxon>
        <taxon>Gammaproteobacteria</taxon>
        <taxon>Enterobacterales</taxon>
        <taxon>Enterobacteriaceae</taxon>
        <taxon>Escherichia</taxon>
    </lineage>
</organism>
<comment type="function">
    <text evidence="1">Together with LptD, is involved in the assembly of lipopolysaccharide (LPS) at the surface of the outer membrane. Required for the proper assembly of LptD. Binds LPS and may serve as the LPS recognition site at the outer membrane.</text>
</comment>
<comment type="subunit">
    <text evidence="1">Component of the lipopolysaccharide transport and assembly complex. Interacts with LptD.</text>
</comment>
<comment type="subcellular location">
    <subcellularLocation>
        <location evidence="1">Cell outer membrane</location>
        <topology evidence="1">Lipid-anchor</topology>
    </subcellularLocation>
</comment>
<comment type="similarity">
    <text evidence="1">Belongs to the LptE lipoprotein family.</text>
</comment>
<keyword id="KW-0998">Cell outer membrane</keyword>
<keyword id="KW-0449">Lipoprotein</keyword>
<keyword id="KW-0472">Membrane</keyword>
<keyword id="KW-0564">Palmitate</keyword>
<keyword id="KW-0732">Signal</keyword>
<feature type="signal peptide" evidence="1">
    <location>
        <begin position="1"/>
        <end position="18"/>
    </location>
</feature>
<feature type="chain" id="PRO_1000164475" description="LPS-assembly lipoprotein LptE">
    <location>
        <begin position="19"/>
        <end position="193"/>
    </location>
</feature>
<feature type="region of interest" description="Disordered" evidence="2">
    <location>
        <begin position="167"/>
        <end position="193"/>
    </location>
</feature>
<feature type="lipid moiety-binding region" description="N-palmitoyl cysteine" evidence="1">
    <location>
        <position position="19"/>
    </location>
</feature>
<feature type="lipid moiety-binding region" description="S-diacylglycerol cysteine" evidence="1">
    <location>
        <position position="19"/>
    </location>
</feature>
<protein>
    <recommendedName>
        <fullName evidence="1">LPS-assembly lipoprotein LptE</fullName>
    </recommendedName>
</protein>
<reference key="1">
    <citation type="journal article" date="2009" name="PLoS Genet.">
        <title>Organised genome dynamics in the Escherichia coli species results in highly diverse adaptive paths.</title>
        <authorList>
            <person name="Touchon M."/>
            <person name="Hoede C."/>
            <person name="Tenaillon O."/>
            <person name="Barbe V."/>
            <person name="Baeriswyl S."/>
            <person name="Bidet P."/>
            <person name="Bingen E."/>
            <person name="Bonacorsi S."/>
            <person name="Bouchier C."/>
            <person name="Bouvet O."/>
            <person name="Calteau A."/>
            <person name="Chiapello H."/>
            <person name="Clermont O."/>
            <person name="Cruveiller S."/>
            <person name="Danchin A."/>
            <person name="Diard M."/>
            <person name="Dossat C."/>
            <person name="Karoui M.E."/>
            <person name="Frapy E."/>
            <person name="Garry L."/>
            <person name="Ghigo J.M."/>
            <person name="Gilles A.M."/>
            <person name="Johnson J."/>
            <person name="Le Bouguenec C."/>
            <person name="Lescat M."/>
            <person name="Mangenot S."/>
            <person name="Martinez-Jehanne V."/>
            <person name="Matic I."/>
            <person name="Nassif X."/>
            <person name="Oztas S."/>
            <person name="Petit M.A."/>
            <person name="Pichon C."/>
            <person name="Rouy Z."/>
            <person name="Ruf C.S."/>
            <person name="Schneider D."/>
            <person name="Tourret J."/>
            <person name="Vacherie B."/>
            <person name="Vallenet D."/>
            <person name="Medigue C."/>
            <person name="Rocha E.P.C."/>
            <person name="Denamur E."/>
        </authorList>
    </citation>
    <scope>NUCLEOTIDE SEQUENCE [LARGE SCALE GENOMIC DNA]</scope>
    <source>
        <strain>ED1a</strain>
    </source>
</reference>
<proteinExistence type="inferred from homology"/>
<gene>
    <name evidence="1" type="primary">lptE</name>
    <name type="synonym">rlpB</name>
    <name type="ordered locus">ECED1_0638</name>
</gene>
<name>LPTE_ECO81</name>
<sequence>MRYLATLLLSLAVLITAGCGWHLRDTTQVPSTMKVMILDSGDPNGPLSRAVRNQLRLNGVELLDKETTRKDVPSLRLGKVSIAKDTASVFRNGQTAEYQMIMTVNATVLIPGRDIYPISAKVFRSFFDNPQMALAKDNEQDMIVKEMYDRAAEQLIRKLPSIRAADIRSDEEQTSTTTDTLATPARVSTTLGN</sequence>
<dbReference type="EMBL" id="CU928162">
    <property type="protein sequence ID" value="CAR06845.1"/>
    <property type="molecule type" value="Genomic_DNA"/>
</dbReference>
<dbReference type="RefSeq" id="WP_001269669.1">
    <property type="nucleotide sequence ID" value="NC_011745.1"/>
</dbReference>
<dbReference type="SMR" id="B7MRS8"/>
<dbReference type="KEGG" id="ecq:ECED1_0638"/>
<dbReference type="HOGENOM" id="CLU_103309_1_1_6"/>
<dbReference type="Proteomes" id="UP000000748">
    <property type="component" value="Chromosome"/>
</dbReference>
<dbReference type="GO" id="GO:0009279">
    <property type="term" value="C:cell outer membrane"/>
    <property type="evidence" value="ECO:0007669"/>
    <property type="project" value="UniProtKB-SubCell"/>
</dbReference>
<dbReference type="GO" id="GO:1990351">
    <property type="term" value="C:transporter complex"/>
    <property type="evidence" value="ECO:0007669"/>
    <property type="project" value="TreeGrafter"/>
</dbReference>
<dbReference type="GO" id="GO:0001530">
    <property type="term" value="F:lipopolysaccharide binding"/>
    <property type="evidence" value="ECO:0007669"/>
    <property type="project" value="TreeGrafter"/>
</dbReference>
<dbReference type="GO" id="GO:0043165">
    <property type="term" value="P:Gram-negative-bacterium-type cell outer membrane assembly"/>
    <property type="evidence" value="ECO:0007669"/>
    <property type="project" value="UniProtKB-UniRule"/>
</dbReference>
<dbReference type="GO" id="GO:0015920">
    <property type="term" value="P:lipopolysaccharide transport"/>
    <property type="evidence" value="ECO:0007669"/>
    <property type="project" value="TreeGrafter"/>
</dbReference>
<dbReference type="FunFam" id="3.30.160.150:FF:000001">
    <property type="entry name" value="LPS-assembly lipoprotein LptE"/>
    <property type="match status" value="1"/>
</dbReference>
<dbReference type="Gene3D" id="3.30.160.150">
    <property type="entry name" value="Lipoprotein like domain"/>
    <property type="match status" value="1"/>
</dbReference>
<dbReference type="HAMAP" id="MF_01186">
    <property type="entry name" value="LPS_assembly_LptE"/>
    <property type="match status" value="1"/>
</dbReference>
<dbReference type="InterPro" id="IPR007485">
    <property type="entry name" value="LPS_assembly_LptE"/>
</dbReference>
<dbReference type="NCBIfam" id="NF008062">
    <property type="entry name" value="PRK10796.1"/>
    <property type="match status" value="1"/>
</dbReference>
<dbReference type="PANTHER" id="PTHR38098">
    <property type="entry name" value="LPS-ASSEMBLY LIPOPROTEIN LPTE"/>
    <property type="match status" value="1"/>
</dbReference>
<dbReference type="PANTHER" id="PTHR38098:SF1">
    <property type="entry name" value="LPS-ASSEMBLY LIPOPROTEIN LPTE"/>
    <property type="match status" value="1"/>
</dbReference>
<dbReference type="Pfam" id="PF04390">
    <property type="entry name" value="LptE"/>
    <property type="match status" value="1"/>
</dbReference>
<dbReference type="PROSITE" id="PS51257">
    <property type="entry name" value="PROKAR_LIPOPROTEIN"/>
    <property type="match status" value="1"/>
</dbReference>